<reference key="1">
    <citation type="journal article" date="2002" name="Nucleic Acids Res.">
        <title>The complete genomic sequence of Mycoplasma penetrans, an intracellular bacterial pathogen in humans.</title>
        <authorList>
            <person name="Sasaki Y."/>
            <person name="Ishikawa J."/>
            <person name="Yamashita A."/>
            <person name="Oshima K."/>
            <person name="Kenri T."/>
            <person name="Furuya K."/>
            <person name="Yoshino C."/>
            <person name="Horino A."/>
            <person name="Shiba T."/>
            <person name="Sasaki T."/>
            <person name="Hattori M."/>
        </authorList>
    </citation>
    <scope>NUCLEOTIDE SEQUENCE [LARGE SCALE GENOMIC DNA]</scope>
    <source>
        <strain>HF-2</strain>
    </source>
</reference>
<name>RL22_MALP2</name>
<comment type="function">
    <text evidence="1">This protein binds specifically to 23S rRNA; its binding is stimulated by other ribosomal proteins, e.g. L4, L17, and L20. It is important during the early stages of 50S assembly. It makes multiple contacts with different domains of the 23S rRNA in the assembled 50S subunit and ribosome (By similarity).</text>
</comment>
<comment type="function">
    <text evidence="1">The globular domain of the protein is located near the polypeptide exit tunnel on the outside of the subunit, while an extended beta-hairpin is found that lines the wall of the exit tunnel in the center of the 70S ribosome.</text>
</comment>
<comment type="subunit">
    <text evidence="1">Part of the 50S ribosomal subunit.</text>
</comment>
<comment type="similarity">
    <text evidence="1">Belongs to the universal ribosomal protein uL22 family.</text>
</comment>
<comment type="sequence caution" evidence="2">
    <conflict type="erroneous termination">
        <sequence resource="EMBL-CDS" id="BAC44798"/>
    </conflict>
    <text>Extended C-terminus.</text>
</comment>
<dbReference type="EMBL" id="BA000026">
    <property type="protein sequence ID" value="BAC44798.1"/>
    <property type="status" value="ALT_TERM"/>
    <property type="molecule type" value="Genomic_DNA"/>
</dbReference>
<dbReference type="RefSeq" id="WP_011077826.1">
    <property type="nucleotide sequence ID" value="NC_004432.1"/>
</dbReference>
<dbReference type="SMR" id="Q8EUB8"/>
<dbReference type="FunCoup" id="Q8EUB8">
    <property type="interactions" value="240"/>
</dbReference>
<dbReference type="STRING" id="272633.gene:10732132"/>
<dbReference type="KEGG" id="mpe:MYPE10120"/>
<dbReference type="eggNOG" id="COG0091">
    <property type="taxonomic scope" value="Bacteria"/>
</dbReference>
<dbReference type="eggNOG" id="COG4933">
    <property type="taxonomic scope" value="Bacteria"/>
</dbReference>
<dbReference type="HOGENOM" id="CLU_894135_0_0_14"/>
<dbReference type="InParanoid" id="Q8EUB8"/>
<dbReference type="Proteomes" id="UP000002522">
    <property type="component" value="Chromosome"/>
</dbReference>
<dbReference type="GO" id="GO:0022625">
    <property type="term" value="C:cytosolic large ribosomal subunit"/>
    <property type="evidence" value="ECO:0007669"/>
    <property type="project" value="TreeGrafter"/>
</dbReference>
<dbReference type="GO" id="GO:0019843">
    <property type="term" value="F:rRNA binding"/>
    <property type="evidence" value="ECO:0007669"/>
    <property type="project" value="UniProtKB-UniRule"/>
</dbReference>
<dbReference type="GO" id="GO:0003735">
    <property type="term" value="F:structural constituent of ribosome"/>
    <property type="evidence" value="ECO:0007669"/>
    <property type="project" value="InterPro"/>
</dbReference>
<dbReference type="GO" id="GO:0006412">
    <property type="term" value="P:translation"/>
    <property type="evidence" value="ECO:0007669"/>
    <property type="project" value="UniProtKB-UniRule"/>
</dbReference>
<dbReference type="CDD" id="cd00336">
    <property type="entry name" value="Ribosomal_L22"/>
    <property type="match status" value="1"/>
</dbReference>
<dbReference type="Gene3D" id="3.90.470.10">
    <property type="entry name" value="Ribosomal protein L22/L17"/>
    <property type="match status" value="1"/>
</dbReference>
<dbReference type="HAMAP" id="MF_01331_B">
    <property type="entry name" value="Ribosomal_uL22_B"/>
    <property type="match status" value="1"/>
</dbReference>
<dbReference type="InterPro" id="IPR001063">
    <property type="entry name" value="Ribosomal_uL22"/>
</dbReference>
<dbReference type="InterPro" id="IPR005727">
    <property type="entry name" value="Ribosomal_uL22_bac/chlpt-type"/>
</dbReference>
<dbReference type="InterPro" id="IPR047867">
    <property type="entry name" value="Ribosomal_uL22_bac/org-type"/>
</dbReference>
<dbReference type="InterPro" id="IPR018260">
    <property type="entry name" value="Ribosomal_uL22_CS"/>
</dbReference>
<dbReference type="InterPro" id="IPR036394">
    <property type="entry name" value="Ribosomal_uL22_sf"/>
</dbReference>
<dbReference type="NCBIfam" id="TIGR01044">
    <property type="entry name" value="rplV_bact"/>
    <property type="match status" value="1"/>
</dbReference>
<dbReference type="PANTHER" id="PTHR13501">
    <property type="entry name" value="CHLOROPLAST 50S RIBOSOMAL PROTEIN L22-RELATED"/>
    <property type="match status" value="1"/>
</dbReference>
<dbReference type="PANTHER" id="PTHR13501:SF8">
    <property type="entry name" value="LARGE RIBOSOMAL SUBUNIT PROTEIN UL22M"/>
    <property type="match status" value="1"/>
</dbReference>
<dbReference type="Pfam" id="PF00237">
    <property type="entry name" value="Ribosomal_L22"/>
    <property type="match status" value="1"/>
</dbReference>
<dbReference type="SUPFAM" id="SSF54843">
    <property type="entry name" value="Ribosomal protein L22"/>
    <property type="match status" value="1"/>
</dbReference>
<dbReference type="PROSITE" id="PS00464">
    <property type="entry name" value="RIBOSOMAL_L22"/>
    <property type="match status" value="1"/>
</dbReference>
<protein>
    <recommendedName>
        <fullName evidence="1">Large ribosomal subunit protein uL22</fullName>
    </recommendedName>
    <alternativeName>
        <fullName evidence="2">50S ribosomal protein L22</fullName>
    </alternativeName>
</protein>
<keyword id="KW-1185">Reference proteome</keyword>
<keyword id="KW-0687">Ribonucleoprotein</keyword>
<keyword id="KW-0689">Ribosomal protein</keyword>
<keyword id="KW-0694">RNA-binding</keyword>
<keyword id="KW-0699">rRNA-binding</keyword>
<feature type="chain" id="PRO_0000125183" description="Large ribosomal subunit protein uL22">
    <location>
        <begin position="1"/>
        <end position="135"/>
    </location>
</feature>
<gene>
    <name evidence="1" type="primary">rplV</name>
    <name type="ordered locus">MYPE10120</name>
</gene>
<evidence type="ECO:0000255" key="1">
    <source>
        <dbReference type="HAMAP-Rule" id="MF_01331"/>
    </source>
</evidence>
<evidence type="ECO:0000305" key="2"/>
<accession>Q8EUB8</accession>
<proteinExistence type="inferred from homology"/>
<organism>
    <name type="scientific">Malacoplasma penetrans (strain HF-2)</name>
    <name type="common">Mycoplasma penetrans</name>
    <dbReference type="NCBI Taxonomy" id="272633"/>
    <lineage>
        <taxon>Bacteria</taxon>
        <taxon>Bacillati</taxon>
        <taxon>Mycoplasmatota</taxon>
        <taxon>Mycoplasmoidales</taxon>
        <taxon>Mycoplasmoidaceae</taxon>
        <taxon>Malacoplasma</taxon>
    </lineage>
</organism>
<sequence>MQARAIQKNIHVSPRKAKLVCDLIRNKPVTNALSILENTNKKTAVFLKKLLHQAIANATNNHAMQADKLYVYHVVANQGSTLKRTSPRAKGSADLIRKRHTHLEIVLSDDVNERNKEIQAIKDRIKKRAANNKGY</sequence>